<feature type="chain" id="PRO_0000089778" description="SMC5-SMC6 complex localization factor protein 2">
    <location>
        <begin position="1"/>
        <end position="1173"/>
    </location>
</feature>
<feature type="region of interest" description="Disordered" evidence="1">
    <location>
        <begin position="1"/>
        <end position="109"/>
    </location>
</feature>
<feature type="region of interest" description="Disordered" evidence="1">
    <location>
        <begin position="161"/>
        <end position="230"/>
    </location>
</feature>
<feature type="region of interest" description="Disordered" evidence="1">
    <location>
        <begin position="256"/>
        <end position="275"/>
    </location>
</feature>
<feature type="region of interest" description="Disordered" evidence="1">
    <location>
        <begin position="280"/>
        <end position="373"/>
    </location>
</feature>
<feature type="region of interest" description="Disordered" evidence="1">
    <location>
        <begin position="394"/>
        <end position="620"/>
    </location>
</feature>
<feature type="region of interest" description="Interaction with SIMC1" evidence="7">
    <location>
        <begin position="635"/>
        <end position="1173"/>
    </location>
</feature>
<feature type="region of interest" description="Disordered" evidence="1">
    <location>
        <begin position="635"/>
        <end position="663"/>
    </location>
</feature>
<feature type="region of interest" description="NSE6-like domain" evidence="7">
    <location>
        <begin position="664"/>
        <end position="1166"/>
    </location>
</feature>
<feature type="region of interest" description="Required for interaction with SLF1 and RAD18" evidence="6">
    <location>
        <begin position="702"/>
        <end position="1173"/>
    </location>
</feature>
<feature type="short sequence motif" description="APIM motif">
    <location>
        <begin position="137"/>
        <end position="149"/>
    </location>
</feature>
<feature type="compositionally biased region" description="Basic and acidic residues" evidence="1">
    <location>
        <begin position="39"/>
        <end position="50"/>
    </location>
</feature>
<feature type="compositionally biased region" description="Basic and acidic residues" evidence="1">
    <location>
        <begin position="88"/>
        <end position="106"/>
    </location>
</feature>
<feature type="compositionally biased region" description="Basic and acidic residues" evidence="1">
    <location>
        <begin position="181"/>
        <end position="199"/>
    </location>
</feature>
<feature type="compositionally biased region" description="Low complexity" evidence="1">
    <location>
        <begin position="212"/>
        <end position="221"/>
    </location>
</feature>
<feature type="compositionally biased region" description="Low complexity" evidence="1">
    <location>
        <begin position="262"/>
        <end position="275"/>
    </location>
</feature>
<feature type="compositionally biased region" description="Basic and acidic residues" evidence="1">
    <location>
        <begin position="280"/>
        <end position="293"/>
    </location>
</feature>
<feature type="compositionally biased region" description="Polar residues" evidence="1">
    <location>
        <begin position="317"/>
        <end position="330"/>
    </location>
</feature>
<feature type="compositionally biased region" description="Basic and acidic residues" evidence="1">
    <location>
        <begin position="339"/>
        <end position="349"/>
    </location>
</feature>
<feature type="compositionally biased region" description="Basic and acidic residues" evidence="1">
    <location>
        <begin position="355"/>
        <end position="373"/>
    </location>
</feature>
<feature type="compositionally biased region" description="Polar residues" evidence="1">
    <location>
        <begin position="409"/>
        <end position="428"/>
    </location>
</feature>
<feature type="compositionally biased region" description="Basic and acidic residues" evidence="1">
    <location>
        <begin position="499"/>
        <end position="520"/>
    </location>
</feature>
<feature type="compositionally biased region" description="Low complexity" evidence="1">
    <location>
        <begin position="571"/>
        <end position="592"/>
    </location>
</feature>
<feature type="compositionally biased region" description="Acidic residues" evidence="1">
    <location>
        <begin position="602"/>
        <end position="619"/>
    </location>
</feature>
<feature type="modified residue" description="Phosphoserine" evidence="13">
    <location>
        <position position="481"/>
    </location>
</feature>
<feature type="modified residue" description="Phosphoserine" evidence="12">
    <location>
        <position position="603"/>
    </location>
</feature>
<feature type="modified residue" description="Phosphoserine" evidence="12">
    <location>
        <position position="607"/>
    </location>
</feature>
<feature type="modified residue" description="Phosphoserine" evidence="12">
    <location>
        <position position="614"/>
    </location>
</feature>
<feature type="splice variant" id="VSP_054914" description="In isoform 3." evidence="8">
    <original>KQSIIDFFKPASKQDR</original>
    <variation>YRAEGLRRGRVAGARV</variation>
    <location>
        <begin position="48"/>
        <end position="63"/>
    </location>
</feature>
<feature type="splice variant" id="VSP_054915" description="In isoform 3." evidence="8">
    <location>
        <begin position="64"/>
        <end position="1173"/>
    </location>
</feature>
<feature type="splice variant" id="VSP_045621" description="In isoform 2." evidence="8">
    <original>GQLHDFWVPDS</original>
    <variation>VSFCYTISCILNSFAEWHSSYCLK</variation>
    <location>
        <begin position="1163"/>
        <end position="1173"/>
    </location>
</feature>
<feature type="sequence variant" id="VAR_087944" description="In ATELS1." evidence="6">
    <location>
        <begin position="190"/>
        <end position="1173"/>
    </location>
</feature>
<feature type="sequence variant" id="VAR_087993" description="Found in a patient with neurodevelopmental disorder with hypotonia, dysmorphic facies and skin abnormalities; uncertain significance; dbSNP:rs752352367." evidence="5">
    <original>S</original>
    <variation>C</variation>
    <location>
        <position position="271"/>
    </location>
</feature>
<feature type="sequence variant" id="VAR_023112" description="In dbSNP:rs10883563." evidence="2">
    <original>S</original>
    <variation>Y</variation>
    <location>
        <position position="541"/>
    </location>
</feature>
<feature type="sequence variant" id="VAR_087945" description="In ATELS1." evidence="6">
    <location>
        <begin position="815"/>
        <end position="1173"/>
    </location>
</feature>
<feature type="sequence variant" id="VAR_087946" description="In ATELS1; dbSNP:rs1266675910." evidence="6">
    <original>N</original>
    <variation>I</variation>
    <location>
        <position position="861"/>
    </location>
</feature>
<feature type="mutagenesis site" description="In APIMmut; does not affect subcellular location." evidence="3">
    <original>Y</original>
    <variation>A</variation>
    <location>
        <position position="142"/>
    </location>
</feature>
<feature type="turn" evidence="14">
    <location>
        <begin position="756"/>
        <end position="758"/>
    </location>
</feature>
<feature type="turn" evidence="14">
    <location>
        <begin position="762"/>
        <end position="764"/>
    </location>
</feature>
<feature type="helix" evidence="14">
    <location>
        <begin position="771"/>
        <end position="778"/>
    </location>
</feature>
<feature type="helix" evidence="14">
    <location>
        <begin position="782"/>
        <end position="789"/>
    </location>
</feature>
<feature type="helix" evidence="14">
    <location>
        <begin position="792"/>
        <end position="796"/>
    </location>
</feature>
<feature type="strand" evidence="14">
    <location>
        <begin position="798"/>
        <end position="800"/>
    </location>
</feature>
<feature type="helix" evidence="14">
    <location>
        <begin position="804"/>
        <end position="816"/>
    </location>
</feature>
<feature type="helix" evidence="14">
    <location>
        <begin position="820"/>
        <end position="840"/>
    </location>
</feature>
<feature type="strand" evidence="14">
    <location>
        <begin position="843"/>
        <end position="845"/>
    </location>
</feature>
<feature type="helix" evidence="14">
    <location>
        <begin position="852"/>
        <end position="862"/>
    </location>
</feature>
<feature type="helix" evidence="14">
    <location>
        <begin position="866"/>
        <end position="869"/>
    </location>
</feature>
<feature type="helix" evidence="14">
    <location>
        <begin position="881"/>
        <end position="891"/>
    </location>
</feature>
<feature type="helix" evidence="14">
    <location>
        <begin position="911"/>
        <end position="927"/>
    </location>
</feature>
<feature type="helix" evidence="14">
    <location>
        <begin position="929"/>
        <end position="931"/>
    </location>
</feature>
<feature type="helix" evidence="14">
    <location>
        <begin position="934"/>
        <end position="948"/>
    </location>
</feature>
<feature type="turn" evidence="14">
    <location>
        <begin position="952"/>
        <end position="955"/>
    </location>
</feature>
<feature type="helix" evidence="14">
    <location>
        <begin position="959"/>
        <end position="971"/>
    </location>
</feature>
<feature type="helix" evidence="14">
    <location>
        <begin position="975"/>
        <end position="988"/>
    </location>
</feature>
<feature type="helix" evidence="14">
    <location>
        <begin position="993"/>
        <end position="1002"/>
    </location>
</feature>
<feature type="helix" evidence="14">
    <location>
        <begin position="1008"/>
        <end position="1025"/>
    </location>
</feature>
<feature type="helix" evidence="14">
    <location>
        <begin position="1039"/>
        <end position="1050"/>
    </location>
</feature>
<feature type="helix" evidence="14">
    <location>
        <begin position="1053"/>
        <end position="1067"/>
    </location>
</feature>
<feature type="strand" evidence="14">
    <location>
        <begin position="1068"/>
        <end position="1070"/>
    </location>
</feature>
<feature type="helix" evidence="14">
    <location>
        <begin position="1075"/>
        <end position="1100"/>
    </location>
</feature>
<feature type="helix" evidence="14">
    <location>
        <begin position="1109"/>
        <end position="1123"/>
    </location>
</feature>
<feature type="turn" evidence="14">
    <location>
        <begin position="1124"/>
        <end position="1127"/>
    </location>
</feature>
<feature type="helix" evidence="14">
    <location>
        <begin position="1135"/>
        <end position="1156"/>
    </location>
</feature>
<keyword id="KW-0002">3D-structure</keyword>
<keyword id="KW-0025">Alternative splicing</keyword>
<keyword id="KW-0225">Disease variant</keyword>
<keyword id="KW-0227">DNA damage</keyword>
<keyword id="KW-0234">DNA repair</keyword>
<keyword id="KW-0539">Nucleus</keyword>
<keyword id="KW-0597">Phosphoprotein</keyword>
<keyword id="KW-1267">Proteomics identification</keyword>
<keyword id="KW-1185">Reference proteome</keyword>
<reference key="1">
    <citation type="journal article" date="2002" name="Gene">
        <title>cDNA cloning, expression profile and genomic structure of a novel human transcript on chromosome 10q24, and its analyses as a candidate gene for infantile onset spinocerebellar ataxia.</title>
        <authorList>
            <person name="Nikali K."/>
            <person name="Saharinen J."/>
            <person name="Peltonen L."/>
        </authorList>
    </citation>
    <scope>NUCLEOTIDE SEQUENCE [MRNA] (ISOFORM 1)</scope>
    <scope>VARIANT TYR-541</scope>
    <scope>TISSUE SPECIFICITY</scope>
    <source>
        <tissue>Lymphoblast</tissue>
    </source>
</reference>
<reference key="2">
    <citation type="journal article" date="2004" name="Nat. Genet.">
        <title>Complete sequencing and characterization of 21,243 full-length human cDNAs.</title>
        <authorList>
            <person name="Ota T."/>
            <person name="Suzuki Y."/>
            <person name="Nishikawa T."/>
            <person name="Otsuki T."/>
            <person name="Sugiyama T."/>
            <person name="Irie R."/>
            <person name="Wakamatsu A."/>
            <person name="Hayashi K."/>
            <person name="Sato H."/>
            <person name="Nagai K."/>
            <person name="Kimura K."/>
            <person name="Makita H."/>
            <person name="Sekine M."/>
            <person name="Obayashi M."/>
            <person name="Nishi T."/>
            <person name="Shibahara T."/>
            <person name="Tanaka T."/>
            <person name="Ishii S."/>
            <person name="Yamamoto J."/>
            <person name="Saito K."/>
            <person name="Kawai Y."/>
            <person name="Isono Y."/>
            <person name="Nakamura Y."/>
            <person name="Nagahari K."/>
            <person name="Murakami K."/>
            <person name="Yasuda T."/>
            <person name="Iwayanagi T."/>
            <person name="Wagatsuma M."/>
            <person name="Shiratori A."/>
            <person name="Sudo H."/>
            <person name="Hosoiri T."/>
            <person name="Kaku Y."/>
            <person name="Kodaira H."/>
            <person name="Kondo H."/>
            <person name="Sugawara M."/>
            <person name="Takahashi M."/>
            <person name="Kanda K."/>
            <person name="Yokoi T."/>
            <person name="Furuya T."/>
            <person name="Kikkawa E."/>
            <person name="Omura Y."/>
            <person name="Abe K."/>
            <person name="Kamihara K."/>
            <person name="Katsuta N."/>
            <person name="Sato K."/>
            <person name="Tanikawa M."/>
            <person name="Yamazaki M."/>
            <person name="Ninomiya K."/>
            <person name="Ishibashi T."/>
            <person name="Yamashita H."/>
            <person name="Murakawa K."/>
            <person name="Fujimori K."/>
            <person name="Tanai H."/>
            <person name="Kimata M."/>
            <person name="Watanabe M."/>
            <person name="Hiraoka S."/>
            <person name="Chiba Y."/>
            <person name="Ishida S."/>
            <person name="Ono Y."/>
            <person name="Takiguchi S."/>
            <person name="Watanabe S."/>
            <person name="Yosida M."/>
            <person name="Hotuta T."/>
            <person name="Kusano J."/>
            <person name="Kanehori K."/>
            <person name="Takahashi-Fujii A."/>
            <person name="Hara H."/>
            <person name="Tanase T.-O."/>
            <person name="Nomura Y."/>
            <person name="Togiya S."/>
            <person name="Komai F."/>
            <person name="Hara R."/>
            <person name="Takeuchi K."/>
            <person name="Arita M."/>
            <person name="Imose N."/>
            <person name="Musashino K."/>
            <person name="Yuuki H."/>
            <person name="Oshima A."/>
            <person name="Sasaki N."/>
            <person name="Aotsuka S."/>
            <person name="Yoshikawa Y."/>
            <person name="Matsunawa H."/>
            <person name="Ichihara T."/>
            <person name="Shiohata N."/>
            <person name="Sano S."/>
            <person name="Moriya S."/>
            <person name="Momiyama H."/>
            <person name="Satoh N."/>
            <person name="Takami S."/>
            <person name="Terashima Y."/>
            <person name="Suzuki O."/>
            <person name="Nakagawa S."/>
            <person name="Senoh A."/>
            <person name="Mizoguchi H."/>
            <person name="Goto Y."/>
            <person name="Shimizu F."/>
            <person name="Wakebe H."/>
            <person name="Hishigaki H."/>
            <person name="Watanabe T."/>
            <person name="Sugiyama A."/>
            <person name="Takemoto M."/>
            <person name="Kawakami B."/>
            <person name="Yamazaki M."/>
            <person name="Watanabe K."/>
            <person name="Kumagai A."/>
            <person name="Itakura S."/>
            <person name="Fukuzumi Y."/>
            <person name="Fujimori Y."/>
            <person name="Komiyama M."/>
            <person name="Tashiro H."/>
            <person name="Tanigami A."/>
            <person name="Fujiwara T."/>
            <person name="Ono T."/>
            <person name="Yamada K."/>
            <person name="Fujii Y."/>
            <person name="Ozaki K."/>
            <person name="Hirao M."/>
            <person name="Ohmori Y."/>
            <person name="Kawabata A."/>
            <person name="Hikiji T."/>
            <person name="Kobatake N."/>
            <person name="Inagaki H."/>
            <person name="Ikema Y."/>
            <person name="Okamoto S."/>
            <person name="Okitani R."/>
            <person name="Kawakami T."/>
            <person name="Noguchi S."/>
            <person name="Itoh T."/>
            <person name="Shigeta K."/>
            <person name="Senba T."/>
            <person name="Matsumura K."/>
            <person name="Nakajima Y."/>
            <person name="Mizuno T."/>
            <person name="Morinaga M."/>
            <person name="Sasaki M."/>
            <person name="Togashi T."/>
            <person name="Oyama M."/>
            <person name="Hata H."/>
            <person name="Watanabe M."/>
            <person name="Komatsu T."/>
            <person name="Mizushima-Sugano J."/>
            <person name="Satoh T."/>
            <person name="Shirai Y."/>
            <person name="Takahashi Y."/>
            <person name="Nakagawa K."/>
            <person name="Okumura K."/>
            <person name="Nagase T."/>
            <person name="Nomura N."/>
            <person name="Kikuchi H."/>
            <person name="Masuho Y."/>
            <person name="Yamashita R."/>
            <person name="Nakai K."/>
            <person name="Yada T."/>
            <person name="Nakamura Y."/>
            <person name="Ohara O."/>
            <person name="Isogai T."/>
            <person name="Sugano S."/>
        </authorList>
    </citation>
    <scope>NUCLEOTIDE SEQUENCE [LARGE SCALE MRNA] (ISOFORM 1)</scope>
    <source>
        <tissue>Testis</tissue>
    </source>
</reference>
<reference key="3">
    <citation type="journal article" date="2004" name="Nature">
        <title>The DNA sequence and comparative analysis of human chromosome 10.</title>
        <authorList>
            <person name="Deloukas P."/>
            <person name="Earthrowl M.E."/>
            <person name="Grafham D.V."/>
            <person name="Rubenfield M."/>
            <person name="French L."/>
            <person name="Steward C.A."/>
            <person name="Sims S.K."/>
            <person name="Jones M.C."/>
            <person name="Searle S."/>
            <person name="Scott C."/>
            <person name="Howe K."/>
            <person name="Hunt S.E."/>
            <person name="Andrews T.D."/>
            <person name="Gilbert J.G.R."/>
            <person name="Swarbreck D."/>
            <person name="Ashurst J.L."/>
            <person name="Taylor A."/>
            <person name="Battles J."/>
            <person name="Bird C.P."/>
            <person name="Ainscough R."/>
            <person name="Almeida J.P."/>
            <person name="Ashwell R.I.S."/>
            <person name="Ambrose K.D."/>
            <person name="Babbage A.K."/>
            <person name="Bagguley C.L."/>
            <person name="Bailey J."/>
            <person name="Banerjee R."/>
            <person name="Bates K."/>
            <person name="Beasley H."/>
            <person name="Bray-Allen S."/>
            <person name="Brown A.J."/>
            <person name="Brown J.Y."/>
            <person name="Burford D.C."/>
            <person name="Burrill W."/>
            <person name="Burton J."/>
            <person name="Cahill P."/>
            <person name="Camire D."/>
            <person name="Carter N.P."/>
            <person name="Chapman J.C."/>
            <person name="Clark S.Y."/>
            <person name="Clarke G."/>
            <person name="Clee C.M."/>
            <person name="Clegg S."/>
            <person name="Corby N."/>
            <person name="Coulson A."/>
            <person name="Dhami P."/>
            <person name="Dutta I."/>
            <person name="Dunn M."/>
            <person name="Faulkner L."/>
            <person name="Frankish A."/>
            <person name="Frankland J.A."/>
            <person name="Garner P."/>
            <person name="Garnett J."/>
            <person name="Gribble S."/>
            <person name="Griffiths C."/>
            <person name="Grocock R."/>
            <person name="Gustafson E."/>
            <person name="Hammond S."/>
            <person name="Harley J.L."/>
            <person name="Hart E."/>
            <person name="Heath P.D."/>
            <person name="Ho T.P."/>
            <person name="Hopkins B."/>
            <person name="Horne J."/>
            <person name="Howden P.J."/>
            <person name="Huckle E."/>
            <person name="Hynds C."/>
            <person name="Johnson C."/>
            <person name="Johnson D."/>
            <person name="Kana A."/>
            <person name="Kay M."/>
            <person name="Kimberley A.M."/>
            <person name="Kershaw J.K."/>
            <person name="Kokkinaki M."/>
            <person name="Laird G.K."/>
            <person name="Lawlor S."/>
            <person name="Lee H.M."/>
            <person name="Leongamornlert D.A."/>
            <person name="Laird G."/>
            <person name="Lloyd C."/>
            <person name="Lloyd D.M."/>
            <person name="Loveland J."/>
            <person name="Lovell J."/>
            <person name="McLaren S."/>
            <person name="McLay K.E."/>
            <person name="McMurray A."/>
            <person name="Mashreghi-Mohammadi M."/>
            <person name="Matthews L."/>
            <person name="Milne S."/>
            <person name="Nickerson T."/>
            <person name="Nguyen M."/>
            <person name="Overton-Larty E."/>
            <person name="Palmer S.A."/>
            <person name="Pearce A.V."/>
            <person name="Peck A.I."/>
            <person name="Pelan S."/>
            <person name="Phillimore B."/>
            <person name="Porter K."/>
            <person name="Rice C.M."/>
            <person name="Rogosin A."/>
            <person name="Ross M.T."/>
            <person name="Sarafidou T."/>
            <person name="Sehra H.K."/>
            <person name="Shownkeen R."/>
            <person name="Skuce C.D."/>
            <person name="Smith M."/>
            <person name="Standring L."/>
            <person name="Sycamore N."/>
            <person name="Tester J."/>
            <person name="Thorpe A."/>
            <person name="Torcasso W."/>
            <person name="Tracey A."/>
            <person name="Tromans A."/>
            <person name="Tsolas J."/>
            <person name="Wall M."/>
            <person name="Walsh J."/>
            <person name="Wang H."/>
            <person name="Weinstock K."/>
            <person name="West A.P."/>
            <person name="Willey D.L."/>
            <person name="Whitehead S.L."/>
            <person name="Wilming L."/>
            <person name="Wray P.W."/>
            <person name="Young L."/>
            <person name="Chen Y."/>
            <person name="Lovering R.C."/>
            <person name="Moschonas N.K."/>
            <person name="Siebert R."/>
            <person name="Fechtel K."/>
            <person name="Bentley D."/>
            <person name="Durbin R.M."/>
            <person name="Hubbard T."/>
            <person name="Doucette-Stamm L."/>
            <person name="Beck S."/>
            <person name="Smith D.R."/>
            <person name="Rogers J."/>
        </authorList>
    </citation>
    <scope>NUCLEOTIDE SEQUENCE [LARGE SCALE GENOMIC DNA]</scope>
</reference>
<reference key="4">
    <citation type="journal article" date="2004" name="Genome Res.">
        <title>The status, quality, and expansion of the NIH full-length cDNA project: the Mammalian Gene Collection (MGC).</title>
        <authorList>
            <consortium name="The MGC Project Team"/>
        </authorList>
    </citation>
    <scope>NUCLEOTIDE SEQUENCE [LARGE SCALE MRNA] (ISOFORMS 2 AND 3)</scope>
    <source>
        <tissue>Kidney</tissue>
    </source>
</reference>
<reference key="5">
    <citation type="journal article" date="2008" name="Proc. Natl. Acad. Sci. U.S.A.">
        <title>A quantitative atlas of mitotic phosphorylation.</title>
        <authorList>
            <person name="Dephoure N."/>
            <person name="Zhou C."/>
            <person name="Villen J."/>
            <person name="Beausoleil S.A."/>
            <person name="Bakalarski C.E."/>
            <person name="Elledge S.J."/>
            <person name="Gygi S.P."/>
        </authorList>
    </citation>
    <scope>IDENTIFICATION BY MASS SPECTROMETRY [LARGE SCALE ANALYSIS]</scope>
    <source>
        <tissue>Cervix carcinoma</tissue>
    </source>
</reference>
<reference key="6">
    <citation type="journal article" date="2011" name="Sci. Signal.">
        <title>System-wide temporal characterization of the proteome and phosphoproteome of human embryonic stem cell differentiation.</title>
        <authorList>
            <person name="Rigbolt K.T."/>
            <person name="Prokhorova T.A."/>
            <person name="Akimov V."/>
            <person name="Henningsen J."/>
            <person name="Johansen P.T."/>
            <person name="Kratchmarova I."/>
            <person name="Kassem M."/>
            <person name="Mann M."/>
            <person name="Olsen J.V."/>
            <person name="Blagoev B."/>
        </authorList>
    </citation>
    <scope>PHOSPHORYLATION [LARGE SCALE ANALYSIS] AT SER-603; SER-607 AND SER-614</scope>
    <scope>IDENTIFICATION BY MASS SPECTROMETRY [LARGE SCALE ANALYSIS]</scope>
</reference>
<reference key="7">
    <citation type="journal article" date="2013" name="J. Proteome Res.">
        <title>Toward a comprehensive characterization of a human cancer cell phosphoproteome.</title>
        <authorList>
            <person name="Zhou H."/>
            <person name="Di Palma S."/>
            <person name="Preisinger C."/>
            <person name="Peng M."/>
            <person name="Polat A.N."/>
            <person name="Heck A.J."/>
            <person name="Mohammed S."/>
        </authorList>
    </citation>
    <scope>PHOSPHORYLATION [LARGE SCALE ANALYSIS] AT SER-481</scope>
    <scope>IDENTIFICATION BY MASS SPECTROMETRY [LARGE SCALE ANALYSIS]</scope>
    <source>
        <tissue>Erythroleukemia</tissue>
    </source>
</reference>
<reference key="8">
    <citation type="journal article" date="2014" name="Nat. Cell Biol.">
        <title>Nascent chromatin capture proteomics determines chromatin dynamics during DNA replication and identifies unknown fork components.</title>
        <authorList>
            <person name="Alabert C."/>
            <person name="Bukowski-Wills J.C."/>
            <person name="Lee S.B."/>
            <person name="Kustatscher G."/>
            <person name="Nakamura K."/>
            <person name="de Lima Alves F."/>
            <person name="Menard P."/>
            <person name="Mejlvang J."/>
            <person name="Rappsilber J."/>
            <person name="Groth A."/>
        </authorList>
    </citation>
    <scope>SUBCELLULAR LOCATION</scope>
    <scope>MUTAGENESIS OF TYR-142</scope>
</reference>
<reference key="9">
    <citation type="journal article" date="2015" name="Science">
        <title>DNA repair. Proteomics reveals dynamic assembly of repair complexes during bypass of DNA cross-links.</title>
        <authorList>
            <person name="Raeschle M."/>
            <person name="Smeenk G."/>
            <person name="Hansen R.K."/>
            <person name="Temu T."/>
            <person name="Oka Y."/>
            <person name="Hein M.Y."/>
            <person name="Nagaraj N."/>
            <person name="Long D.T."/>
            <person name="Walter J.C."/>
            <person name="Hofmann K."/>
            <person name="Storchova Z."/>
            <person name="Cox J."/>
            <person name="Bekker-Jensen S."/>
            <person name="Mailand N."/>
            <person name="Mann M."/>
        </authorList>
    </citation>
    <scope>FUNCTION</scope>
    <scope>INTERACTION WITH RAD18; SLF1; SMC5 AND SMC6</scope>
    <scope>SUBCELLULAR LOCATION</scope>
    <scope>IDENTIFICATION BY MASS SPECTROMETRY</scope>
</reference>
<reference key="10">
    <citation type="journal article" date="2022" name="Elife">
        <title>The Nse5/6-like SIMC1-SLF2 complex localizes SMC5/6 to viral replication centers.</title>
        <authorList>
            <person name="Oravcova M."/>
            <person name="Nie M."/>
            <person name="Zilio N."/>
            <person name="Maeda S."/>
            <person name="Jami-Alahmadi Y."/>
            <person name="Lazzerini-Denchi E."/>
            <person name="Wohlschlegel J.A."/>
            <person name="Ulrich H.D."/>
            <person name="Otomo T."/>
            <person name="Boddy M.N."/>
        </authorList>
    </citation>
    <scope>STRUCTURE BY ELECTRON MICROSCOPY (3.50 ANGSTROMS) OF 635-1173 IN COMPLEX WITH SIMC1</scope>
    <scope>FUNCTION</scope>
    <scope>SUBUNIT</scope>
    <scope>SUBCELLULAR LOCATION</scope>
    <scope>REGION NSE6-LIKE DOMAIN</scope>
    <scope>INTERACTION WITH SLF1 AND SIMC1</scope>
</reference>
<reference key="11">
    <citation type="journal article" date="2022" name="Nat. Commun.">
        <title>Pathogenic variants in SLF2 and SMC5 cause segmented chromosomes and mosaic variegated hyperploidy.</title>
        <authorList>
            <person name="Grange L.J."/>
            <person name="Reynolds J.J."/>
            <person name="Ullah F."/>
            <person name="Isidor B."/>
            <person name="Shearer R.F."/>
            <person name="Latypova X."/>
            <person name="Baxley R.M."/>
            <person name="Oliver A.W."/>
            <person name="Ganesh A."/>
            <person name="Cooke S.L."/>
            <person name="Jhujh S.S."/>
            <person name="McNee G.S."/>
            <person name="Hollingworth R."/>
            <person name="Higgs M.R."/>
            <person name="Natsume T."/>
            <person name="Khan T."/>
            <person name="Martos-Moreno G.A."/>
            <person name="Chupp S."/>
            <person name="Mathew C.G."/>
            <person name="Parry D."/>
            <person name="Simpson M.A."/>
            <person name="Nahavandi N."/>
            <person name="Yueksel Z."/>
            <person name="Drasdo M."/>
            <person name="Kron A."/>
            <person name="Vogt P."/>
            <person name="Jonasson A."/>
            <person name="Seth S.A."/>
            <person name="Gonzaga-Jauregui C."/>
            <person name="Brigatti K.W."/>
            <person name="Stegmann A.P.A."/>
            <person name="Kanemaki M."/>
            <person name="Josifova D."/>
            <person name="Uchiyama Y."/>
            <person name="Oh Y."/>
            <person name="Morimoto A."/>
            <person name="Osaka H."/>
            <person name="Ammous Z."/>
            <person name="Argente J."/>
            <person name="Matsumoto N."/>
            <person name="Stumpel C.T.R.M."/>
            <person name="Taylor A.M.R."/>
            <person name="Jackson A.P."/>
            <person name="Bielinsky A.K."/>
            <person name="Mailand N."/>
            <person name="Le Caignec C."/>
            <person name="Davis E.E."/>
            <person name="Stewart G.S."/>
        </authorList>
    </citation>
    <scope>INVOLVEMENT IN ATELS1</scope>
    <scope>TISSUE SPECIFICITY</scope>
    <scope>INTERACTION WITH SLF1 AND RAD18</scope>
    <scope>REGION</scope>
    <scope>VARIANTS ATELS1 190-ARG--SER-1173 DEL; 815-SER--SER-1173 DEL AND ILE-861</scope>
</reference>
<reference key="12">
    <citation type="journal article" date="2021" name="Am. J. Hum. Genet.">
        <title>Impaired glucose-1,6-biphosphate production due to bi-allelic PGM2L1 mutations is associated with a neurodevelopmental disorder.</title>
        <authorList>
            <person name="Morava E."/>
            <person name="Schatz U.A."/>
            <person name="Torring P.M."/>
            <person name="Abbott M.A."/>
            <person name="Baumann M."/>
            <person name="Brasch-Andersen C."/>
            <person name="Chevalier N."/>
            <person name="Dunkhase-Heinl U."/>
            <person name="Fleger M."/>
            <person name="Haack T.B."/>
            <person name="Nelson S."/>
            <person name="Potelle S."/>
            <person name="Radenkovic S."/>
            <person name="Bommer G.T."/>
            <person name="Van Schaftingen E."/>
            <person name="Veiga-da-Cunha M."/>
        </authorList>
    </citation>
    <scope>VARIANT CYS-271</scope>
</reference>
<proteinExistence type="evidence at protein level"/>
<evidence type="ECO:0000256" key="1">
    <source>
        <dbReference type="SAM" id="MobiDB-lite"/>
    </source>
</evidence>
<evidence type="ECO:0000269" key="2">
    <source>
    </source>
</evidence>
<evidence type="ECO:0000269" key="3">
    <source>
    </source>
</evidence>
<evidence type="ECO:0000269" key="4">
    <source>
    </source>
</evidence>
<evidence type="ECO:0000269" key="5">
    <source>
    </source>
</evidence>
<evidence type="ECO:0000269" key="6">
    <source>
    </source>
</evidence>
<evidence type="ECO:0000269" key="7">
    <source>
    </source>
</evidence>
<evidence type="ECO:0000303" key="8">
    <source>
    </source>
</evidence>
<evidence type="ECO:0000303" key="9">
    <source>
    </source>
</evidence>
<evidence type="ECO:0000305" key="10"/>
<evidence type="ECO:0000312" key="11">
    <source>
        <dbReference type="HGNC" id="HGNC:17814"/>
    </source>
</evidence>
<evidence type="ECO:0007744" key="12">
    <source>
    </source>
</evidence>
<evidence type="ECO:0007744" key="13">
    <source>
    </source>
</evidence>
<evidence type="ECO:0007829" key="14">
    <source>
        <dbReference type="PDB" id="7T5P"/>
    </source>
</evidence>
<dbReference type="EMBL" id="AF460991">
    <property type="protein sequence ID" value="AAN84475.1"/>
    <property type="molecule type" value="mRNA"/>
</dbReference>
<dbReference type="EMBL" id="AK001374">
    <property type="protein sequence ID" value="BAA91657.1"/>
    <property type="status" value="ALT_INIT"/>
    <property type="molecule type" value="mRNA"/>
</dbReference>
<dbReference type="EMBL" id="AK292565">
    <property type="protein sequence ID" value="BAF85254.1"/>
    <property type="molecule type" value="mRNA"/>
</dbReference>
<dbReference type="EMBL" id="AL138762">
    <property type="status" value="NOT_ANNOTATED_CDS"/>
    <property type="molecule type" value="Genomic_DNA"/>
</dbReference>
<dbReference type="EMBL" id="AL133215">
    <property type="status" value="NOT_ANNOTATED_CDS"/>
    <property type="molecule type" value="Genomic_DNA"/>
</dbReference>
<dbReference type="EMBL" id="BC030565">
    <property type="status" value="NOT_ANNOTATED_CDS"/>
    <property type="molecule type" value="mRNA"/>
</dbReference>
<dbReference type="EMBL" id="BC073832">
    <property type="protein sequence ID" value="AAH73832.1"/>
    <property type="molecule type" value="mRNA"/>
</dbReference>
<dbReference type="CCDS" id="CCDS44470.1">
    <molecule id="Q8IX21-2"/>
</dbReference>
<dbReference type="CCDS" id="CCDS65918.1">
    <molecule id="Q8IX21-3"/>
</dbReference>
<dbReference type="CCDS" id="CCDS7500.1">
    <molecule id="Q8IX21-1"/>
</dbReference>
<dbReference type="RefSeq" id="NP_001129595.1">
    <molecule id="Q8IX21-2"/>
    <property type="nucleotide sequence ID" value="NM_001136123.2"/>
</dbReference>
<dbReference type="RefSeq" id="NP_001230699.1">
    <molecule id="Q8IX21-3"/>
    <property type="nucleotide sequence ID" value="NM_001243770.2"/>
</dbReference>
<dbReference type="RefSeq" id="NP_060591.3">
    <molecule id="Q8IX21-1"/>
    <property type="nucleotide sequence ID" value="NM_018121.3"/>
</dbReference>
<dbReference type="PDB" id="7T5P">
    <property type="method" value="EM"/>
    <property type="resolution" value="3.40 A"/>
    <property type="chains" value="B=635-1173"/>
</dbReference>
<dbReference type="PDBsum" id="7T5P"/>
<dbReference type="EMDB" id="EMD-25706"/>
<dbReference type="SMR" id="Q8IX21"/>
<dbReference type="BioGRID" id="120841">
    <property type="interactions" value="38"/>
</dbReference>
<dbReference type="ComplexPortal" id="CPX-5992">
    <property type="entry name" value="SMC5-SMC6 SUMO ligase complex, EID3 variant"/>
</dbReference>
<dbReference type="ComplexPortal" id="CPX-6086">
    <property type="entry name" value="SMC5-SMC6 SUMO ligase complex, NSE4EA variant"/>
</dbReference>
<dbReference type="FunCoup" id="Q8IX21">
    <property type="interactions" value="1979"/>
</dbReference>
<dbReference type="IntAct" id="Q8IX21">
    <property type="interactions" value="27"/>
</dbReference>
<dbReference type="MINT" id="Q8IX21"/>
<dbReference type="STRING" id="9606.ENSP00000359292"/>
<dbReference type="GlyGen" id="Q8IX21">
    <property type="glycosylation" value="1 site, 1 O-linked glycan (1 site)"/>
</dbReference>
<dbReference type="iPTMnet" id="Q8IX21"/>
<dbReference type="PhosphoSitePlus" id="Q8IX21"/>
<dbReference type="BioMuta" id="SLF2"/>
<dbReference type="DMDM" id="73620064"/>
<dbReference type="jPOST" id="Q8IX21"/>
<dbReference type="MassIVE" id="Q8IX21"/>
<dbReference type="PaxDb" id="9606-ENSP00000359292"/>
<dbReference type="PeptideAtlas" id="Q8IX21"/>
<dbReference type="ProteomicsDB" id="3129"/>
<dbReference type="ProteomicsDB" id="70968">
    <molecule id="Q8IX21-1"/>
</dbReference>
<dbReference type="Pumba" id="Q8IX21"/>
<dbReference type="Antibodypedia" id="49598">
    <property type="antibodies" value="19 antibodies from 8 providers"/>
</dbReference>
<dbReference type="DNASU" id="55719"/>
<dbReference type="Ensembl" id="ENST00000238961.9">
    <molecule id="Q8IX21-1"/>
    <property type="protein sequence ID" value="ENSP00000238961.3"/>
    <property type="gene ID" value="ENSG00000119906.13"/>
</dbReference>
<dbReference type="Ensembl" id="ENST00000370269.3">
    <molecule id="Q8IX21-2"/>
    <property type="protein sequence ID" value="ENSP00000359292.3"/>
    <property type="gene ID" value="ENSG00000119906.13"/>
</dbReference>
<dbReference type="Ensembl" id="ENST00000609386.1">
    <molecule id="Q8IX21-3"/>
    <property type="protein sequence ID" value="ENSP00000476379.1"/>
    <property type="gene ID" value="ENSG00000119906.13"/>
</dbReference>
<dbReference type="GeneID" id="55719"/>
<dbReference type="KEGG" id="hsa:55719"/>
<dbReference type="MANE-Select" id="ENST00000238961.9">
    <property type="protein sequence ID" value="ENSP00000238961.3"/>
    <property type="RefSeq nucleotide sequence ID" value="NM_018121.4"/>
    <property type="RefSeq protein sequence ID" value="NP_060591.3"/>
</dbReference>
<dbReference type="UCSC" id="uc001krq.5">
    <molecule id="Q8IX21-1"/>
    <property type="organism name" value="human"/>
</dbReference>
<dbReference type="AGR" id="HGNC:17814"/>
<dbReference type="CTD" id="55719"/>
<dbReference type="DisGeNET" id="55719"/>
<dbReference type="GeneCards" id="SLF2"/>
<dbReference type="HGNC" id="HGNC:17814">
    <property type="gene designation" value="SLF2"/>
</dbReference>
<dbReference type="HPA" id="ENSG00000119906">
    <property type="expression patterns" value="Low tissue specificity"/>
</dbReference>
<dbReference type="MalaCards" id="SLF2"/>
<dbReference type="MIM" id="610348">
    <property type="type" value="gene"/>
</dbReference>
<dbReference type="MIM" id="620184">
    <property type="type" value="phenotype"/>
</dbReference>
<dbReference type="neXtProt" id="NX_Q8IX21"/>
<dbReference type="OpenTargets" id="ENSG00000119906"/>
<dbReference type="PharmGKB" id="PA162387411"/>
<dbReference type="VEuPathDB" id="HostDB:ENSG00000119906"/>
<dbReference type="eggNOG" id="ENOG502QW1I">
    <property type="taxonomic scope" value="Eukaryota"/>
</dbReference>
<dbReference type="GeneTree" id="ENSGT00530000064017"/>
<dbReference type="HOGENOM" id="CLU_008361_0_0_1"/>
<dbReference type="InParanoid" id="Q8IX21"/>
<dbReference type="OrthoDB" id="6158547at2759"/>
<dbReference type="PAN-GO" id="Q8IX21">
    <property type="GO annotations" value="5 GO annotations based on evolutionary models"/>
</dbReference>
<dbReference type="PhylomeDB" id="Q8IX21"/>
<dbReference type="TreeFam" id="TF332216"/>
<dbReference type="PathwayCommons" id="Q8IX21"/>
<dbReference type="SignaLink" id="Q8IX21"/>
<dbReference type="BioGRID-ORCS" id="55719">
    <property type="hits" value="57 hits in 1152 CRISPR screens"/>
</dbReference>
<dbReference type="ChiTaRS" id="SLF2">
    <property type="organism name" value="human"/>
</dbReference>
<dbReference type="GenomeRNAi" id="55719"/>
<dbReference type="Pharos" id="Q8IX21">
    <property type="development level" value="Tbio"/>
</dbReference>
<dbReference type="PRO" id="PR:Q8IX21"/>
<dbReference type="Proteomes" id="UP000005640">
    <property type="component" value="Chromosome 10"/>
</dbReference>
<dbReference type="RNAct" id="Q8IX21">
    <property type="molecule type" value="protein"/>
</dbReference>
<dbReference type="Bgee" id="ENSG00000119906">
    <property type="expression patterns" value="Expressed in adrenal tissue and 198 other cell types or tissues"/>
</dbReference>
<dbReference type="ExpressionAtlas" id="Q8IX21">
    <property type="expression patterns" value="baseline and differential"/>
</dbReference>
<dbReference type="GO" id="GO:0000785">
    <property type="term" value="C:chromatin"/>
    <property type="evidence" value="ECO:0000314"/>
    <property type="project" value="UniProtKB"/>
</dbReference>
<dbReference type="GO" id="GO:0000781">
    <property type="term" value="C:chromosome, telomeric region"/>
    <property type="evidence" value="ECO:0000303"/>
    <property type="project" value="ComplexPortal"/>
</dbReference>
<dbReference type="GO" id="GO:0043231">
    <property type="term" value="C:intracellular membrane-bounded organelle"/>
    <property type="evidence" value="ECO:0000314"/>
    <property type="project" value="HPA"/>
</dbReference>
<dbReference type="GO" id="GO:0005654">
    <property type="term" value="C:nucleoplasm"/>
    <property type="evidence" value="ECO:0000314"/>
    <property type="project" value="HPA"/>
</dbReference>
<dbReference type="GO" id="GO:0005634">
    <property type="term" value="C:nucleus"/>
    <property type="evidence" value="ECO:0000314"/>
    <property type="project" value="UniProtKB"/>
</dbReference>
<dbReference type="GO" id="GO:0016605">
    <property type="term" value="C:PML body"/>
    <property type="evidence" value="ECO:0000314"/>
    <property type="project" value="UniProtKB"/>
</dbReference>
<dbReference type="GO" id="GO:0035861">
    <property type="term" value="C:site of double-strand break"/>
    <property type="evidence" value="ECO:0000314"/>
    <property type="project" value="UniProtKB"/>
</dbReference>
<dbReference type="GO" id="GO:0030915">
    <property type="term" value="C:Smc5-Smc6 complex"/>
    <property type="evidence" value="ECO:0000303"/>
    <property type="project" value="ComplexPortal"/>
</dbReference>
<dbReference type="GO" id="GO:0044877">
    <property type="term" value="F:protein-containing complex binding"/>
    <property type="evidence" value="ECO:0000353"/>
    <property type="project" value="UniProtKB"/>
</dbReference>
<dbReference type="GO" id="GO:0031625">
    <property type="term" value="F:ubiquitin protein ligase binding"/>
    <property type="evidence" value="ECO:0000353"/>
    <property type="project" value="UniProtKB"/>
</dbReference>
<dbReference type="GO" id="GO:0140588">
    <property type="term" value="P:chromatin looping"/>
    <property type="evidence" value="ECO:0000303"/>
    <property type="project" value="ComplexPortal"/>
</dbReference>
<dbReference type="GO" id="GO:0006974">
    <property type="term" value="P:DNA damage response"/>
    <property type="evidence" value="ECO:0000314"/>
    <property type="project" value="UniProtKB"/>
</dbReference>
<dbReference type="GO" id="GO:0000724">
    <property type="term" value="P:double-strand break repair via homologous recombination"/>
    <property type="evidence" value="ECO:0000303"/>
    <property type="project" value="ComplexPortal"/>
</dbReference>
<dbReference type="GO" id="GO:2000781">
    <property type="term" value="P:positive regulation of double-strand break repair"/>
    <property type="evidence" value="ECO:0000314"/>
    <property type="project" value="UniProtKB"/>
</dbReference>
<dbReference type="GO" id="GO:0034184">
    <property type="term" value="P:positive regulation of maintenance of mitotic sister chromatid cohesion"/>
    <property type="evidence" value="ECO:0000315"/>
    <property type="project" value="UniProtKB"/>
</dbReference>
<dbReference type="GO" id="GO:0031334">
    <property type="term" value="P:positive regulation of protein-containing complex assembly"/>
    <property type="evidence" value="ECO:0000315"/>
    <property type="project" value="UniProtKB"/>
</dbReference>
<dbReference type="GO" id="GO:1990166">
    <property type="term" value="P:protein localization to site of double-strand break"/>
    <property type="evidence" value="ECO:0000314"/>
    <property type="project" value="UniProtKB"/>
</dbReference>
<dbReference type="GO" id="GO:0016925">
    <property type="term" value="P:protein sumoylation"/>
    <property type="evidence" value="ECO:0000303"/>
    <property type="project" value="ComplexPortal"/>
</dbReference>
<dbReference type="GO" id="GO:0032204">
    <property type="term" value="P:regulation of telomere maintenance"/>
    <property type="evidence" value="ECO:0000303"/>
    <property type="project" value="ComplexPortal"/>
</dbReference>
<dbReference type="InterPro" id="IPR044276">
    <property type="entry name" value="CANIN_dom"/>
</dbReference>
<dbReference type="InterPro" id="IPR026161">
    <property type="entry name" value="FAM178"/>
</dbReference>
<dbReference type="PANTHER" id="PTHR16046">
    <property type="entry name" value="SMC5-SMC6 COMPLEX LOCALIZATION FACTOR 2"/>
    <property type="match status" value="1"/>
</dbReference>
<dbReference type="PANTHER" id="PTHR16046:SF10">
    <property type="entry name" value="SMC5-SMC6 COMPLEX LOCALIZATION FACTOR PROTEIN 2"/>
    <property type="match status" value="1"/>
</dbReference>
<dbReference type="Pfam" id="PF14816">
    <property type="entry name" value="CANIN"/>
    <property type="match status" value="1"/>
</dbReference>
<comment type="function">
    <text evidence="4 7">Plays a role in the DNA damage response (DDR) pathway by regulating postreplication repair of UV-damaged DNA and genomic stability maintenance (PubMed:25931565). The SLF1-SLF2 complex acts to link RAD18 with the SMC5-SMC6 complex at replication-coupled interstrand cross-links (ICL) and DNA double-strand breaks (DSBs) sites on chromatin during DNA repair in response to stalled replication forks (PubMed:25931565). Promotes the recruitment of the SMC5-SMC6 complex to DNA lesions (PubMed:25931565). Plays a role in SMC5-SMC6 complex recruitment for viral restriction. Forms a complex with SIMC1 and this complex is required to recruit SMC5-SMC6 complex to PML nuclear bodies and sites of viral replication (PubMed:36373674).</text>
</comment>
<comment type="subunit">
    <text evidence="4 6 7">Forms a heterodimer with SIMC1 (PubMed:36373674). Interacts with SLF1 (via N-terminus); this interaction links RAD18 to the SMC5-SMC6 complex (PubMed:25931565, PubMed:36333305, PubMed:36373674). Interacts with RAD18; this interaction is increased in a SLF1-dependent manner (PubMed:25931565, PubMed:36333305). Interacts with SMC5 and SMC6 (PubMed:25931565).</text>
</comment>
<comment type="interaction">
    <interactant intactId="EBI-2682240">
        <id>Q8IX21</id>
    </interactant>
    <interactant intactId="EBI-359352">
        <id>P25786</id>
        <label>PSMA1</label>
    </interactant>
    <organismsDiffer>false</organismsDiffer>
    <experiments>3</experiments>
</comment>
<comment type="interaction">
    <interactant intactId="EBI-2682240">
        <id>Q8IX21</id>
    </interactant>
    <interactant intactId="EBI-12025260">
        <id>Q5VUG0</id>
        <label>SFMBT2</label>
    </interactant>
    <organismsDiffer>false</organismsDiffer>
    <experiments>3</experiments>
</comment>
<comment type="interaction">
    <interactant intactId="EBI-2682240">
        <id>Q8IX21</id>
    </interactant>
    <interactant intactId="EBI-724973">
        <id>Q8NDZ2</id>
        <label>SIMC1</label>
    </interactant>
    <organismsDiffer>false</organismsDiffer>
    <experiments>8</experiments>
</comment>
<comment type="interaction">
    <interactant intactId="EBI-2682240">
        <id>Q8IX21</id>
    </interactant>
    <interactant intactId="EBI-10975834">
        <id>Q9BQI6</id>
        <label>SLF1</label>
    </interactant>
    <organismsDiffer>false</organismsDiffer>
    <experiments>9</experiments>
</comment>
<comment type="interaction">
    <interactant intactId="EBI-2682240">
        <id>Q8IX21</id>
    </interactant>
    <interactant intactId="EBI-605405">
        <id>Q8IY18</id>
        <label>SMC5</label>
    </interactant>
    <organismsDiffer>false</organismsDiffer>
    <experiments>4</experiments>
</comment>
<comment type="interaction">
    <interactant intactId="EBI-2682240">
        <id>Q8IX21</id>
    </interactant>
    <interactant intactId="EBI-605415">
        <id>Q96SB8</id>
        <label>SMC6</label>
    </interactant>
    <organismsDiffer>false</organismsDiffer>
    <experiments>6</experiments>
</comment>
<comment type="interaction">
    <interactant intactId="EBI-2682240">
        <id>Q8IX21</id>
    </interactant>
    <interactant intactId="EBI-2820256">
        <id>Q14142</id>
        <label>TRIM14</label>
    </interactant>
    <organismsDiffer>false</organismsDiffer>
    <experiments>3</experiments>
</comment>
<comment type="subcellular location">
    <subcellularLocation>
        <location evidence="3 4">Nucleus</location>
    </subcellularLocation>
    <subcellularLocation>
        <location evidence="7">Nucleus</location>
        <location evidence="7">PML body</location>
    </subcellularLocation>
    <text evidence="3 4">Mainly localizes in the nucleus (PubMed:24561620). Colocalizes with PCNA on replication sites (PubMed:24561620). Associates with chromatin (PubMed:25931565). Accumulates with RAD18 and the SMC5-SMC6 complex at replication-coupled DNA interstrand repair and DNA double-strand breaks (DSBs) sites on chromatin in a ubiquitin-dependent manner (PubMed:25931565).</text>
</comment>
<comment type="alternative products">
    <event type="alternative splicing"/>
    <isoform>
        <id>Q8IX21-1</id>
        <name>1</name>
        <sequence type="displayed"/>
    </isoform>
    <isoform>
        <id>Q8IX21-2</id>
        <name>2</name>
        <sequence type="described" ref="VSP_045621"/>
    </isoform>
    <isoform>
        <id>Q8IX21-3</id>
        <name>3</name>
        <sequence type="described" ref="VSP_054914 VSP_054915"/>
    </isoform>
</comment>
<comment type="tissue specificity">
    <text evidence="2 6">Widely expressed (PubMed:12459258, PubMed:36333305). Expressed at higher level in skeletal muscle and at slightly lower level in brain, liver and heart, than in lung, kidney, spleen and thymus (PubMed:12459258).</text>
</comment>
<comment type="disease" evidence="6">
    <disease id="DI-06582">
        <name>Atelis syndrome 1</name>
        <acronym>ATELS1</acronym>
        <description>A form of Atelis syndrome, an autosomal recessive neurodevelopmental disorder characterized by mild to severe developmental delay, learning difficulties, microcephaly, and growth restriction with short stature. Additional features include anemia, skin hyperpigmentation, ocular anomalies, congenital heart defects, and mild skeletal abnormalities. Death in childhood may occur. Patient cells show spontaneous chromosome breakage and chromosomal anomalies, hallmarked by segmented and dicentric chromosomes and mosaic variegated hyperploidy.</description>
        <dbReference type="MIM" id="620184"/>
    </disease>
    <text>The disease is caused by variants affecting the gene represented in this entry.</text>
</comment>
<comment type="miscellaneous">
    <text>Localized in the locus associated with inherited infantile onset spinocerebellar ataxia (IOSCA). No mutation were found associated with IOSCA compared to control subjects. The expression level in the brain was not different between the 2 populations.</text>
</comment>
<comment type="similarity">
    <text evidence="10">Belongs to the FAM178 family.</text>
</comment>
<comment type="sequence caution" evidence="10">
    <conflict type="erroneous initiation">
        <sequence resource="EMBL-CDS" id="BAA91657"/>
    </conflict>
    <text>Truncated N-terminus.</text>
</comment>
<protein>
    <recommendedName>
        <fullName evidence="11">SMC5-SMC6 complex localization factor protein 2</fullName>
    </recommendedName>
    <alternativeName>
        <fullName evidence="9">Smc5/6 localization factor 1</fullName>
    </alternativeName>
</protein>
<organism>
    <name type="scientific">Homo sapiens</name>
    <name type="common">Human</name>
    <dbReference type="NCBI Taxonomy" id="9606"/>
    <lineage>
        <taxon>Eukaryota</taxon>
        <taxon>Metazoa</taxon>
        <taxon>Chordata</taxon>
        <taxon>Craniata</taxon>
        <taxon>Vertebrata</taxon>
        <taxon>Euteleostomi</taxon>
        <taxon>Mammalia</taxon>
        <taxon>Eutheria</taxon>
        <taxon>Euarchontoglires</taxon>
        <taxon>Primates</taxon>
        <taxon>Haplorrhini</taxon>
        <taxon>Catarrhini</taxon>
        <taxon>Hominidae</taxon>
        <taxon>Homo</taxon>
    </lineage>
</organism>
<gene>
    <name evidence="9 11" type="primary">SLF2</name>
    <name type="synonym">C10orf6</name>
    <name type="synonym">FAM178A</name>
</gene>
<sequence>MTRRCMPARPGFPSSPAPGSSPPRCHLRPGSTAHAAAGKRTESPGDRKQSIIDFFKPASKQDRHMLDSPQKSNIKYGGSRLSITGTEQFERKLSSPKESKPKRVPPEKSPIIEAFMKGVKEHHEDHGIHESRRPCLSLASKYLAKGTNIYVPSSYHLPKEMKSLKKKHRSPERRKSLFIHENNEKNDRDRGKTNADSKKQTTVAEADIFNNSSRSLSSRSSLSRHHPEESPLGAKFQLSLASYCRERELKRLRKEQMEQRINSENSFSEASSLSLKSSIERKYKPRQEQRKQNDIIPGKNNLSNVENGHLSRKRSSSDSWEPTSAGSKQNKFPEKRKRNSVDSDLKSTRESMIPKARESFLEKRPDGPHQKEKFIKHIALKTPGDVLRLEDISKEPSDETDGSSAGLAPSNSGNSGHHSTRNSDQIQVAGTKETKMQKPHLPLSQEKSAIKKASNLQKNKTASSTTKEKETKLPLLSRVPSAGSSLVPLNAKNCALPVSKKDKERSSSKECSGHSTESTKHKEHKAKTNKADSNVSSGKISGGPLRSEYGTPTKSPPAALEVVPCIPSPAAPSDKAPSEGESSGNSNAGSSALKRKLRGDFDSDEESLGYNLDSDEEEETLKSLEEIMALNFNQTPAATGKPPALSKGLRSQSSDYTGHVHPGTYTNTLERLVKEMEDTQRLDELQKQLQEDIRQGRGIKSPIRIGEEDSTDDEDGLLEEHKEFLKKFSVTIDAIPDHHPGEEIFNFLNSGKIFNQYTLDLRDSGFIGQSAVEKLILKSGKTDQIFLTTQGFLTSAYHYVQCPVPVLKWLFRMMSVHTDCIVSVQILSTLMEITIRNDTFSDSPVWPWIPSLSDVAAVFFNMGIDFRSLFPLENLQPDFNEDYLVSETQTTSRGKESEDSSYKPIFSTLPETNILNVVKFLGLCTSIHPEGYQDREIMLLILMLFKMSLEKQLKQIPLVDFQSLLINLMKNIRDWNTKVPELCLGINELSSHPHNLLWLVQLVPNWTSRGRQLRQCLSLVIISKLLDEKHEDVPNASNLQVSVLHRYLVQMKPSDLLKKMVLKKKAEQPDGIIDDSLHLELEKQAYYLTYILLHLVGEVSCSHSFSSGQRKHFVLLCGALEKHVKCDIREDARLFYRTKVKDLVARIHGKWQEIIQNCRPTQGQLHDFWVPDS</sequence>
<accession>Q8IX21</accession>
<accession>A8K950</accession>
<accession>B1AL17</accession>
<accession>Q5W0L8</accession>
<accession>Q6GMU6</accession>
<accession>Q9NPE8</accession>
<name>SLF2_HUMAN</name>